<sequence>MGAASGRRSPPLLLPLLLLLLPPPPVILELDPALQPGNFPADEAGAQIFAASFNSSAEQVLFQSTAASWAHDTNITEENARLQEEAALLSQEFSEAWGQKAKDLFDPVWQNFTDPTLLRIIGAVRTLGPANLDLEKRQKYNSLLSNMSRIYSTAKVCFPNKTAPCWSLDPELTNILASSRSYTLLLYAWEGWHNAAGIPLKPLYQDFTALSNEAYKQDGFSDTGAYWRSWYDSPTFTEDLERLYQQLEPLYLNLHAYVRRALHRRYGDRYINLRGPIPAHLLGNMWAQSWENIYDTVVPFPDKPNLDVTDVMVQKGWNATHMFRVAEEFFTSLGLLPMPPEFWAESMLEKPSDGREVVCHASAWDFYNRKDFRIKQCTRVTMDQLSTVHHEMGHVQYYLQYKGQHVSLRRGANPGFHEAIGDVLALSVSTPAHLHKIGLLDQVTNDTESDINYLLKMALEKIAFLPFGYLVDQWRWGVFSGRTPPSRYNYDWWYLRTKYQGICPPVVRNETHFDAGAKFHVPNVTPYIRYFVSFVLQFQFHEALCKEAGHQGPLHQCDIYQSTQAGAKLRALLQAGSSRPWQEVLKDMVGSDNLDARPLLSYFQPVTQWLEEQNQQNGEVLGWPEYQWRPPMPDNYPEGIDLVSDEDEARKFVEEYDRRSQVVWNEYAEANWNYSTDISTDNSKLLMEKNLQMANHTVKYGTWARKFDVTNFQNATMKRMIKKIQDLERAALPTKELEEYNQILLDMETVYSVASVCHENGTCLRLEPDLTNLMATSRNYQDLAWAWKSWRDKVGRSILPYFPKYVELTNKAARLNGYQDGGDSWRSMYEMPFLEEELEQLFQELQPLYLNLHAYVRRALHRHYGPDVINLEGPIPAHLLGNMWAQSWSNIYDLVAPFPSAPKMDATEAMIKQGWTPLRMFKEADNFFTSLGLLPMPPEFWNKSMLEKPTDGREVVCHASAWDFFNGKDFRIKQCTSVNMEDLVVAHHEMGHIQYFMQYKDLPVTFREGANPGFHEAIGDVLALSVSTPTHLHKINLLSSGDGGYEEDINFLMKMALEKIAFIPFSFLVDQWRWRVFDGSVTRENYNQEWWSLRLKYQGVCPPLARSQDDFDPGAKFHIPASVPYVRYFVSFVIQFQFHQALCQAAGHQGPLHKCDIYQSKEAGKLLADAMKLGFSQPWPEAMRLITGQSNMSAAAMMTYFKPLLDWLVTENGRHGEKLGWPQYNWTPNSARLEGPFVGSGRVNFLGLNLEEQQARVGQWVLLFLGVALLVATLGLTQRLFSIRHHSLRRPHRGPQFGSEVELRHS</sequence>
<keyword id="KW-0112">Calmodulin-binding</keyword>
<keyword id="KW-0121">Carboxypeptidase</keyword>
<keyword id="KW-1003">Cell membrane</keyword>
<keyword id="KW-0963">Cytoplasm</keyword>
<keyword id="KW-0903">Direct protein sequencing</keyword>
<keyword id="KW-1015">Disulfide bond</keyword>
<keyword id="KW-0325">Glycoprotein</keyword>
<keyword id="KW-0378">Hydrolase</keyword>
<keyword id="KW-0472">Membrane</keyword>
<keyword id="KW-0479">Metal-binding</keyword>
<keyword id="KW-0482">Metalloprotease</keyword>
<keyword id="KW-0597">Phosphoprotein</keyword>
<keyword id="KW-0645">Protease</keyword>
<keyword id="KW-1185">Reference proteome</keyword>
<keyword id="KW-0677">Repeat</keyword>
<keyword id="KW-0964">Secreted</keyword>
<keyword id="KW-0732">Signal</keyword>
<keyword id="KW-0812">Transmembrane</keyword>
<keyword id="KW-1133">Transmembrane helix</keyword>
<keyword id="KW-0862">Zinc</keyword>
<proteinExistence type="evidence at protein level"/>
<comment type="function">
    <text evidence="1 2">Dipeptidyl carboxypeptidase that removes dipeptides from the C-terminus of a variety of circulating hormones, such as angiotensin I, bradykinin or enkephalins, thereby playing a key role in the regulation of blood pressure, electrolyte homeostasis or synaptic plasticity. Composed of two similar catalytic domains, each possessing a functional active site, with different selectivity for substrates. Plays a major role in the angiotensin-renin system that regulates blood pressure and sodium retention by the kidney by converting angiotensin I to angiotensin II, resulting in an increase of the vasoconstrictor activity of angiotensin. Also able to inactivate bradykinin, a potent vasodilator, and therefore enhance the blood pressure response. Acts as a regulator of synaptic transmission by mediating cleavage of neuropeptide hormones, such as substance P, neurotensin or enkephalins. Catalyzes degradation of different enkephalin neuropeptides (Met-enkephalin, Leu-enkephalin, Met-enkephalin-Arg-Phe and possibly Met-enkephalin-Arg-Gly-Leu) (By similarity). Acts as a regulator of synaptic plasticity in the nucleus accumbens of the brain by mediating cleavage of Met-enkephalin-Arg-Phe, a strong ligand of Mu-type opioid receptor OPRM1, into Met-enkephalin. Met-enkephalin-Arg-Phe cleavage by ACE decreases activation of OPRM1, leading to long-term synaptic potentiation of glutamate release (By similarity). Also acts as a regulator of hematopoietic stem cell differentiation by mediating degradation of hemoregulatory peptide N-acetyl-SDKP (AcSDKP). Acts as a regulator of cannabinoid signaling pathway by mediating degradation of hemopressin, an antagonist peptide of the cannabinoid receptor CNR1. Involved in amyloid-beta metabolism by catalyzing degradation of Amyloid-beta protein 40 and Amyloid-beta protein 42 peptides, thereby preventing plaque formation. Catalyzes cleavage of cholecystokinin (maturation of Cholecystokinin-8 and Cholecystokinin-5) and Gonadoliberin-1 (both maturation and degradation) hormones. Degradation of hemoregulatory peptide N-acetyl-SDKP (AcSDKP) and amyloid-beta proteins is mediated by the N-terminal catalytic domain, while angiotensin I and cholecystokinin cleavage is mediated by the C-terminal catalytic region (By similarity).</text>
</comment>
<comment type="function">
    <molecule>Angiotensin-converting enzyme, soluble form</molecule>
    <text evidence="2">Soluble form that is released in blood plasma and other body fluids following proteolytic cleavage in the juxtamembrane stalk region.</text>
</comment>
<comment type="catalytic activity">
    <reaction evidence="2">
        <text>Release of a C-terminal dipeptide, oligopeptide-|-Xaa-Yaa, when Xaa is not Pro, and Yaa is neither Asp nor Glu. Thus, conversion of angiotensin I to angiotensin II, with increase in vasoconstrictor activity, but no action on angiotensin II.</text>
        <dbReference type="EC" id="3.4.15.1"/>
    </reaction>
</comment>
<comment type="catalytic activity">
    <reaction evidence="2">
        <text>angiotensin I + H2O = L-histidyl-L-leucine + angiotensin II</text>
        <dbReference type="Rhea" id="RHEA:63560"/>
        <dbReference type="ChEBI" id="CHEBI:15377"/>
        <dbReference type="ChEBI" id="CHEBI:58506"/>
        <dbReference type="ChEBI" id="CHEBI:147350"/>
        <dbReference type="ChEBI" id="CHEBI:147392"/>
        <dbReference type="EC" id="3.4.15.1"/>
    </reaction>
    <physiologicalReaction direction="left-to-right" evidence="2">
        <dbReference type="Rhea" id="RHEA:63561"/>
    </physiologicalReaction>
</comment>
<comment type="catalytic activity">
    <reaction evidence="2">
        <text>bradykinin + H2O = L-Phe-L-Arg + bradykinin(1-7)</text>
        <dbReference type="Rhea" id="RHEA:71451"/>
        <dbReference type="ChEBI" id="CHEBI:15377"/>
        <dbReference type="ChEBI" id="CHEBI:132988"/>
        <dbReference type="ChEBI" id="CHEBI:133147"/>
        <dbReference type="ChEBI" id="CHEBI:147352"/>
    </reaction>
    <physiologicalReaction direction="left-to-right" evidence="2">
        <dbReference type="Rhea" id="RHEA:71452"/>
    </physiologicalReaction>
</comment>
<comment type="catalytic activity">
    <reaction evidence="2">
        <text>substance P + H2O = substance P(1-9) + L-Leu-L-Met-NH2</text>
        <dbReference type="Rhea" id="RHEA:71459"/>
        <dbReference type="ChEBI" id="CHEBI:15377"/>
        <dbReference type="ChEBI" id="CHEBI:190692"/>
        <dbReference type="ChEBI" id="CHEBI:190693"/>
        <dbReference type="ChEBI" id="CHEBI:190700"/>
    </reaction>
    <physiologicalReaction direction="left-to-right" evidence="2">
        <dbReference type="Rhea" id="RHEA:71460"/>
    </physiologicalReaction>
</comment>
<comment type="catalytic activity">
    <reaction evidence="2">
        <text>substance P + H2O = substance P(1-8) + Gly-L-Leu-L-Met-NH2</text>
        <dbReference type="Rhea" id="RHEA:71463"/>
        <dbReference type="ChEBI" id="CHEBI:15377"/>
        <dbReference type="ChEBI" id="CHEBI:190692"/>
        <dbReference type="ChEBI" id="CHEBI:190694"/>
        <dbReference type="ChEBI" id="CHEBI:190699"/>
    </reaction>
    <physiologicalReaction direction="left-to-right" evidence="2">
        <dbReference type="Rhea" id="RHEA:71464"/>
    </physiologicalReaction>
</comment>
<comment type="catalytic activity">
    <reaction evidence="2">
        <text>substance P + H2O = L-Phe-L-Phe-Gly-L-Leu-L-Met-NH2 + substance P(1-6)</text>
        <dbReference type="Rhea" id="RHEA:71471"/>
        <dbReference type="ChEBI" id="CHEBI:15377"/>
        <dbReference type="ChEBI" id="CHEBI:190692"/>
        <dbReference type="ChEBI" id="CHEBI:190696"/>
        <dbReference type="ChEBI" id="CHEBI:190697"/>
    </reaction>
    <physiologicalReaction direction="left-to-right" evidence="2">
        <dbReference type="Rhea" id="RHEA:71472"/>
    </physiologicalReaction>
</comment>
<comment type="catalytic activity">
    <reaction evidence="2">
        <text>neurotensin + H2O = neurotensin(1-11) + L-isoleucyl-L-leucine</text>
        <dbReference type="Rhea" id="RHEA:71475"/>
        <dbReference type="ChEBI" id="CHEBI:15377"/>
        <dbReference type="ChEBI" id="CHEBI:147362"/>
        <dbReference type="ChEBI" id="CHEBI:190704"/>
        <dbReference type="ChEBI" id="CHEBI:190706"/>
    </reaction>
    <physiologicalReaction direction="left-to-right" evidence="2">
        <dbReference type="Rhea" id="RHEA:71476"/>
    </physiologicalReaction>
</comment>
<comment type="catalytic activity">
    <reaction evidence="2">
        <text>goralatide + H2O = N-acetyl-L-seryl-L-aspartate + L-lysyl-L-proline</text>
        <dbReference type="Rhea" id="RHEA:71455"/>
        <dbReference type="ChEBI" id="CHEBI:15377"/>
        <dbReference type="ChEBI" id="CHEBI:190701"/>
        <dbReference type="ChEBI" id="CHEBI:190702"/>
        <dbReference type="ChEBI" id="CHEBI:190703"/>
    </reaction>
    <physiologicalReaction direction="left-to-right" evidence="2">
        <dbReference type="Rhea" id="RHEA:71456"/>
    </physiologicalReaction>
</comment>
<comment type="catalytic activity">
    <reaction evidence="2">
        <text>Met-enkephalin + H2O = L-phenylalanyl-L-methionine + L-tyrosylglycylglycine</text>
        <dbReference type="Rhea" id="RHEA:71483"/>
        <dbReference type="ChEBI" id="CHEBI:15377"/>
        <dbReference type="ChEBI" id="CHEBI:189868"/>
        <dbReference type="ChEBI" id="CHEBI:190708"/>
        <dbReference type="ChEBI" id="CHEBI:190709"/>
    </reaction>
    <physiologicalReaction direction="left-to-right" evidence="2">
        <dbReference type="Rhea" id="RHEA:71484"/>
    </physiologicalReaction>
</comment>
<comment type="catalytic activity">
    <reaction evidence="2">
        <text>Leu-enkephalin + H2O = L-tyrosylglycylglycine + L-phenylalanyl-L-leucine</text>
        <dbReference type="Rhea" id="RHEA:71487"/>
        <dbReference type="ChEBI" id="CHEBI:15377"/>
        <dbReference type="ChEBI" id="CHEBI:190689"/>
        <dbReference type="ChEBI" id="CHEBI:190708"/>
        <dbReference type="ChEBI" id="CHEBI:190710"/>
    </reaction>
    <physiologicalReaction direction="left-to-right" evidence="2">
        <dbReference type="Rhea" id="RHEA:71488"/>
    </physiologicalReaction>
</comment>
<comment type="catalytic activity">
    <reaction evidence="1">
        <text>Met-enkephalin-Arg-Phe + H2O = L-arginyl-L-phenylalanine + Met-enkephalin</text>
        <dbReference type="Rhea" id="RHEA:70675"/>
        <dbReference type="ChEBI" id="CHEBI:15377"/>
        <dbReference type="ChEBI" id="CHEBI:189868"/>
        <dbReference type="ChEBI" id="CHEBI:189869"/>
        <dbReference type="ChEBI" id="CHEBI:189870"/>
    </reaction>
    <physiologicalReaction direction="left-to-right" evidence="1">
        <dbReference type="Rhea" id="RHEA:70676"/>
    </physiologicalReaction>
</comment>
<comment type="cofactor">
    <cofactor evidence="2">
        <name>Zn(2+)</name>
        <dbReference type="ChEBI" id="CHEBI:29105"/>
    </cofactor>
    <text evidence="2">Binds 2 Zn(2+) ions per subunit.</text>
</comment>
<comment type="cofactor">
    <cofactor evidence="2">
        <name>chloride</name>
        <dbReference type="ChEBI" id="CHEBI:17996"/>
    </cofactor>
    <text evidence="2">Binds 3 chloride ions per subunit.</text>
</comment>
<comment type="activity regulation">
    <text evidence="2">The dipeptidyl carboxypeptidase activity is strongly activated by chloride. The dipeptidyl carboxypeptidase activity is specifically inhibited by lisinopril, captopril and enalaprilat.</text>
</comment>
<comment type="subunit">
    <text evidence="2 3">Monomer and homodimer; homodimerizes following binding to an inhibitor (By similarity). Interacts with calmodulin (CALM1, CALM2 or CALM3); interaction takes place in the cytoplasmic region and regulates phosphorylation and proteolytic cleavage (By similarity).</text>
</comment>
<comment type="subcellular location">
    <subcellularLocation>
        <location evidence="2">Cell membrane</location>
        <topology evidence="4">Single-pass type I membrane protein</topology>
    </subcellularLocation>
    <subcellularLocation>
        <location evidence="1">Cytoplasm</location>
    </subcellularLocation>
    <text evidence="1">Detected in both cell membrane and cytoplasm in neurons.</text>
</comment>
<comment type="subcellular location">
    <molecule>Angiotensin-converting enzyme, soluble form</molecule>
    <subcellularLocation>
        <location evidence="2">Secreted</location>
    </subcellularLocation>
</comment>
<comment type="PTM">
    <molecule>Angiotensin-converting enzyme, soluble form</molecule>
    <text evidence="2">Produced following proteolytic cleavage by secretase enzymes that cleave the transmembrane form in the juxtamembrane stalk region upstream of the transmembrane region. Cleavage can take place at different sites of the juxtamembrane stalk region.</text>
</comment>
<comment type="PTM">
    <text evidence="2 3">Phosphorylated by CK2 on Ser-1299; which allows membrane retention (By similarity). Phosphorylated on tyrosine residues on its extracellular part, promoting cleavage by secretase enzymes and formation of the soluble form (Angiotensin-converting enzyme, soluble form) (By similarity).</text>
</comment>
<comment type="similarity">
    <text evidence="9">Belongs to the peptidase M2 family.</text>
</comment>
<accession>P12820</accession>
<accession>F1MQJ0</accession>
<accession>Q0GA41</accession>
<organism>
    <name type="scientific">Bos taurus</name>
    <name type="common">Bovine</name>
    <dbReference type="NCBI Taxonomy" id="9913"/>
    <lineage>
        <taxon>Eukaryota</taxon>
        <taxon>Metazoa</taxon>
        <taxon>Chordata</taxon>
        <taxon>Craniata</taxon>
        <taxon>Vertebrata</taxon>
        <taxon>Euteleostomi</taxon>
        <taxon>Mammalia</taxon>
        <taxon>Eutheria</taxon>
        <taxon>Laurasiatheria</taxon>
        <taxon>Artiodactyla</taxon>
        <taxon>Ruminantia</taxon>
        <taxon>Pecora</taxon>
        <taxon>Bovidae</taxon>
        <taxon>Bovinae</taxon>
        <taxon>Bos</taxon>
    </lineage>
</organism>
<name>ACE_BOVIN</name>
<dbReference type="EC" id="3.4.15.1" evidence="2"/>
<dbReference type="EMBL" id="DQ885942">
    <property type="protein sequence ID" value="ABI35897.2"/>
    <property type="molecule type" value="Genomic_DNA"/>
</dbReference>
<dbReference type="PIR" id="A26376">
    <property type="entry name" value="A26376"/>
</dbReference>
<dbReference type="RefSeq" id="NP_001193597.1">
    <property type="nucleotide sequence ID" value="NM_001206668.1"/>
</dbReference>
<dbReference type="SMR" id="P12820"/>
<dbReference type="FunCoup" id="P12820">
    <property type="interactions" value="4"/>
</dbReference>
<dbReference type="IntAct" id="P12820">
    <property type="interactions" value="1"/>
</dbReference>
<dbReference type="MINT" id="P12820"/>
<dbReference type="STRING" id="9913.ENSBTAP00000053314"/>
<dbReference type="MEROPS" id="M02.001"/>
<dbReference type="GlyCosmos" id="P12820">
    <property type="glycosylation" value="16 sites, No reported glycans"/>
</dbReference>
<dbReference type="GlyGen" id="P12820">
    <property type="glycosylation" value="16 sites"/>
</dbReference>
<dbReference type="PaxDb" id="9913-ENSBTAP00000053314"/>
<dbReference type="GeneID" id="509484"/>
<dbReference type="KEGG" id="bta:509484"/>
<dbReference type="CTD" id="1636"/>
<dbReference type="VEuPathDB" id="HostDB:ENSBTAG00000024950"/>
<dbReference type="eggNOG" id="KOG3690">
    <property type="taxonomic scope" value="Eukaryota"/>
</dbReference>
<dbReference type="InParanoid" id="P12820"/>
<dbReference type="OMA" id="GMPPEFW"/>
<dbReference type="OrthoDB" id="10029630at2759"/>
<dbReference type="BRENDA" id="3.4.15.1">
    <property type="organism ID" value="908"/>
</dbReference>
<dbReference type="Reactome" id="R-BTA-2022377">
    <property type="pathway name" value="Metabolism of Angiotensinogen to Angiotensins"/>
</dbReference>
<dbReference type="Proteomes" id="UP000009136">
    <property type="component" value="Chromosome 19"/>
</dbReference>
<dbReference type="Bgee" id="ENSBTAG00000024950">
    <property type="expression patterns" value="Expressed in spermatid and 101 other cell types or tissues"/>
</dbReference>
<dbReference type="GO" id="GO:0005768">
    <property type="term" value="C:endosome"/>
    <property type="evidence" value="ECO:0007669"/>
    <property type="project" value="Ensembl"/>
</dbReference>
<dbReference type="GO" id="GO:0009897">
    <property type="term" value="C:external side of plasma membrane"/>
    <property type="evidence" value="ECO:0007669"/>
    <property type="project" value="Ensembl"/>
</dbReference>
<dbReference type="GO" id="GO:0070062">
    <property type="term" value="C:extracellular exosome"/>
    <property type="evidence" value="ECO:0007669"/>
    <property type="project" value="Ensembl"/>
</dbReference>
<dbReference type="GO" id="GO:0005764">
    <property type="term" value="C:lysosome"/>
    <property type="evidence" value="ECO:0007669"/>
    <property type="project" value="Ensembl"/>
</dbReference>
<dbReference type="GO" id="GO:0005886">
    <property type="term" value="C:plasma membrane"/>
    <property type="evidence" value="ECO:0000318"/>
    <property type="project" value="GO_Central"/>
</dbReference>
<dbReference type="GO" id="GO:0031711">
    <property type="term" value="F:bradykinin receptor binding"/>
    <property type="evidence" value="ECO:0007669"/>
    <property type="project" value="Ensembl"/>
</dbReference>
<dbReference type="GO" id="GO:0005516">
    <property type="term" value="F:calmodulin binding"/>
    <property type="evidence" value="ECO:0007669"/>
    <property type="project" value="UniProtKB-KW"/>
</dbReference>
<dbReference type="GO" id="GO:0031404">
    <property type="term" value="F:chloride ion binding"/>
    <property type="evidence" value="ECO:0000250"/>
    <property type="project" value="UniProtKB"/>
</dbReference>
<dbReference type="GO" id="GO:0004181">
    <property type="term" value="F:metallocarboxypeptidase activity"/>
    <property type="evidence" value="ECO:0007669"/>
    <property type="project" value="Ensembl"/>
</dbReference>
<dbReference type="GO" id="GO:0070573">
    <property type="term" value="F:metallodipeptidase activity"/>
    <property type="evidence" value="ECO:0000250"/>
    <property type="project" value="UniProtKB"/>
</dbReference>
<dbReference type="GO" id="GO:0004222">
    <property type="term" value="F:metalloendopeptidase activity"/>
    <property type="evidence" value="ECO:0000250"/>
    <property type="project" value="UniProtKB"/>
</dbReference>
<dbReference type="GO" id="GO:0008237">
    <property type="term" value="F:metallopeptidase activity"/>
    <property type="evidence" value="ECO:0000318"/>
    <property type="project" value="GO_Central"/>
</dbReference>
<dbReference type="GO" id="GO:0051019">
    <property type="term" value="F:mitogen-activated protein kinase binding"/>
    <property type="evidence" value="ECO:0007669"/>
    <property type="project" value="Ensembl"/>
</dbReference>
<dbReference type="GO" id="GO:0031434">
    <property type="term" value="F:mitogen-activated protein kinase kinase binding"/>
    <property type="evidence" value="ECO:0007669"/>
    <property type="project" value="Ensembl"/>
</dbReference>
<dbReference type="GO" id="GO:0008233">
    <property type="term" value="F:peptidase activity"/>
    <property type="evidence" value="ECO:0000250"/>
    <property type="project" value="UniProtKB"/>
</dbReference>
<dbReference type="GO" id="GO:0008241">
    <property type="term" value="F:peptidyl-dipeptidase activity"/>
    <property type="evidence" value="ECO:0000250"/>
    <property type="project" value="UniProtKB"/>
</dbReference>
<dbReference type="GO" id="GO:0008240">
    <property type="term" value="F:tripeptidyl-peptidase activity"/>
    <property type="evidence" value="ECO:0007669"/>
    <property type="project" value="Ensembl"/>
</dbReference>
<dbReference type="GO" id="GO:0008270">
    <property type="term" value="F:zinc ion binding"/>
    <property type="evidence" value="ECO:0007669"/>
    <property type="project" value="Ensembl"/>
</dbReference>
<dbReference type="GO" id="GO:0050435">
    <property type="term" value="P:amyloid-beta metabolic process"/>
    <property type="evidence" value="ECO:0007669"/>
    <property type="project" value="Ensembl"/>
</dbReference>
<dbReference type="GO" id="GO:0002003">
    <property type="term" value="P:angiotensin maturation"/>
    <property type="evidence" value="ECO:0000250"/>
    <property type="project" value="UniProtKB"/>
</dbReference>
<dbReference type="GO" id="GO:0038166">
    <property type="term" value="P:angiotensin-activated signaling pathway"/>
    <property type="evidence" value="ECO:0007669"/>
    <property type="project" value="Ensembl"/>
</dbReference>
<dbReference type="GO" id="GO:0050482">
    <property type="term" value="P:arachidonate secretion"/>
    <property type="evidence" value="ECO:0007669"/>
    <property type="project" value="Ensembl"/>
</dbReference>
<dbReference type="GO" id="GO:0010815">
    <property type="term" value="P:bradykinin catabolic process"/>
    <property type="evidence" value="ECO:0000250"/>
    <property type="project" value="UniProtKB"/>
</dbReference>
<dbReference type="GO" id="GO:0071838">
    <property type="term" value="P:cell proliferation in bone marrow"/>
    <property type="evidence" value="ECO:0007669"/>
    <property type="project" value="Ensembl"/>
</dbReference>
<dbReference type="GO" id="GO:0060047">
    <property type="term" value="P:heart contraction"/>
    <property type="evidence" value="ECO:0007669"/>
    <property type="project" value="Ensembl"/>
</dbReference>
<dbReference type="GO" id="GO:0042447">
    <property type="term" value="P:hormone catabolic process"/>
    <property type="evidence" value="ECO:0000250"/>
    <property type="project" value="UniProtKB"/>
</dbReference>
<dbReference type="GO" id="GO:0042445">
    <property type="term" value="P:hormone metabolic process"/>
    <property type="evidence" value="ECO:0000250"/>
    <property type="project" value="UniProtKB"/>
</dbReference>
<dbReference type="GO" id="GO:0001822">
    <property type="term" value="P:kidney development"/>
    <property type="evidence" value="ECO:0000250"/>
    <property type="project" value="UniProtKB"/>
</dbReference>
<dbReference type="GO" id="GO:0008584">
    <property type="term" value="P:male gonad development"/>
    <property type="evidence" value="ECO:0007669"/>
    <property type="project" value="Ensembl"/>
</dbReference>
<dbReference type="GO" id="GO:1903597">
    <property type="term" value="P:negative regulation of gap junction assembly"/>
    <property type="evidence" value="ECO:0007669"/>
    <property type="project" value="Ensembl"/>
</dbReference>
<dbReference type="GO" id="GO:0010629">
    <property type="term" value="P:negative regulation of gene expression"/>
    <property type="evidence" value="ECO:0007669"/>
    <property type="project" value="Ensembl"/>
</dbReference>
<dbReference type="GO" id="GO:0002446">
    <property type="term" value="P:neutrophil mediated immunity"/>
    <property type="evidence" value="ECO:0007669"/>
    <property type="project" value="Ensembl"/>
</dbReference>
<dbReference type="GO" id="GO:0003084">
    <property type="term" value="P:positive regulation of systemic arterial blood pressure"/>
    <property type="evidence" value="ECO:0000318"/>
    <property type="project" value="GO_Central"/>
</dbReference>
<dbReference type="GO" id="GO:0010608">
    <property type="term" value="P:post-transcriptional regulation of gene expression"/>
    <property type="evidence" value="ECO:0007669"/>
    <property type="project" value="Ensembl"/>
</dbReference>
<dbReference type="GO" id="GO:0060177">
    <property type="term" value="P:regulation of angiotensin metabolic process"/>
    <property type="evidence" value="ECO:0007669"/>
    <property type="project" value="Ensembl"/>
</dbReference>
<dbReference type="GO" id="GO:0008217">
    <property type="term" value="P:regulation of blood pressure"/>
    <property type="evidence" value="ECO:0000250"/>
    <property type="project" value="UniProtKB"/>
</dbReference>
<dbReference type="GO" id="GO:0086091">
    <property type="term" value="P:regulation of heart rate by cardiac conduction"/>
    <property type="evidence" value="ECO:0007669"/>
    <property type="project" value="Ensembl"/>
</dbReference>
<dbReference type="GO" id="GO:1902033">
    <property type="term" value="P:regulation of hematopoietic stem cell proliferation"/>
    <property type="evidence" value="ECO:0007669"/>
    <property type="project" value="Ensembl"/>
</dbReference>
<dbReference type="GO" id="GO:0048167">
    <property type="term" value="P:regulation of synaptic plasticity"/>
    <property type="evidence" value="ECO:0000250"/>
    <property type="project" value="UniProtKB"/>
</dbReference>
<dbReference type="GO" id="GO:0003081">
    <property type="term" value="P:regulation of systemic arterial blood pressure by renin-angiotensin"/>
    <property type="evidence" value="ECO:0000318"/>
    <property type="project" value="GO_Central"/>
</dbReference>
<dbReference type="GO" id="GO:0007283">
    <property type="term" value="P:spermatogenesis"/>
    <property type="evidence" value="ECO:0007669"/>
    <property type="project" value="Ensembl"/>
</dbReference>
<dbReference type="GO" id="GO:0010814">
    <property type="term" value="P:substance P catabolic process"/>
    <property type="evidence" value="ECO:0000250"/>
    <property type="project" value="UniProtKB"/>
</dbReference>
<dbReference type="CDD" id="cd06461">
    <property type="entry name" value="M2_ACE"/>
    <property type="match status" value="2"/>
</dbReference>
<dbReference type="FunFam" id="1.10.1370.30:FF:000004">
    <property type="entry name" value="Angiotensin-converting enzyme"/>
    <property type="match status" value="2"/>
</dbReference>
<dbReference type="Gene3D" id="1.10.1370.30">
    <property type="match status" value="1"/>
</dbReference>
<dbReference type="InterPro" id="IPR001548">
    <property type="entry name" value="Peptidase_M2"/>
</dbReference>
<dbReference type="PANTHER" id="PTHR10514">
    <property type="entry name" value="ANGIOTENSIN-CONVERTING ENZYME"/>
    <property type="match status" value="1"/>
</dbReference>
<dbReference type="PANTHER" id="PTHR10514:SF27">
    <property type="entry name" value="ANGIOTENSIN-CONVERTING ENZYME"/>
    <property type="match status" value="1"/>
</dbReference>
<dbReference type="Pfam" id="PF01401">
    <property type="entry name" value="Peptidase_M2"/>
    <property type="match status" value="2"/>
</dbReference>
<dbReference type="PRINTS" id="PR00791">
    <property type="entry name" value="PEPDIPTASEA"/>
</dbReference>
<dbReference type="SUPFAM" id="SSF55486">
    <property type="entry name" value="Metalloproteases ('zincins'), catalytic domain"/>
    <property type="match status" value="2"/>
</dbReference>
<dbReference type="PROSITE" id="PS52011">
    <property type="entry name" value="PEPTIDASE_M2"/>
    <property type="match status" value="2"/>
</dbReference>
<dbReference type="PROSITE" id="PS00142">
    <property type="entry name" value="ZINC_PROTEASE"/>
    <property type="match status" value="2"/>
</dbReference>
<gene>
    <name evidence="8" type="primary">ACE</name>
    <name type="synonym">DCP1</name>
</gene>
<feature type="signal peptide" evidence="6 7">
    <location>
        <begin position="1"/>
        <end position="28"/>
    </location>
</feature>
<feature type="chain" id="PRO_0000078151" description="Angiotensin-converting enzyme">
    <location>
        <begin position="29"/>
        <end position="1306"/>
    </location>
</feature>
<feature type="chain" id="PRO_0000455834" description="Angiotensin-converting enzyme, soluble form" evidence="2">
    <location>
        <begin position="29"/>
        <end position="1232"/>
    </location>
</feature>
<feature type="topological domain" description="Extracellular" evidence="9">
    <location>
        <begin position="29"/>
        <end position="1256"/>
    </location>
</feature>
<feature type="transmembrane region" description="Helical" evidence="4">
    <location>
        <begin position="1257"/>
        <end position="1277"/>
    </location>
</feature>
<feature type="topological domain" description="Cytoplasmic" evidence="9">
    <location>
        <begin position="1278"/>
        <end position="1306"/>
    </location>
</feature>
<feature type="domain" description="Peptidase M2 1" evidence="5">
    <location>
        <begin position="40"/>
        <end position="624"/>
    </location>
</feature>
<feature type="domain" description="Peptidase M2 2" evidence="5">
    <location>
        <begin position="643"/>
        <end position="1222"/>
    </location>
</feature>
<feature type="region of interest" description="Juxtamembrane stalk" evidence="2">
    <location>
        <begin position="1215"/>
        <end position="1256"/>
    </location>
</feature>
<feature type="active site" description="Proton acceptor 1" evidence="5">
    <location>
        <position position="391"/>
    </location>
</feature>
<feature type="active site" description="Proton donor 1" evidence="5">
    <location>
        <position position="520"/>
    </location>
</feature>
<feature type="active site" description="Proton acceptor 2" evidence="5">
    <location>
        <position position="989"/>
    </location>
</feature>
<feature type="active site" description="Proton donor 2" evidence="5">
    <location>
        <position position="1118"/>
    </location>
</feature>
<feature type="binding site" evidence="5">
    <location>
        <position position="231"/>
    </location>
    <ligand>
        <name>chloride</name>
        <dbReference type="ChEBI" id="CHEBI:17996"/>
        <label>1</label>
    </ligand>
</feature>
<feature type="binding site" evidence="5">
    <location>
        <position position="390"/>
    </location>
    <ligand>
        <name>Zn(2+)</name>
        <dbReference type="ChEBI" id="CHEBI:29105"/>
        <label>1</label>
        <note>catalytic</note>
    </ligand>
</feature>
<feature type="binding site" evidence="5">
    <location>
        <position position="394"/>
    </location>
    <ligand>
        <name>Zn(2+)</name>
        <dbReference type="ChEBI" id="CHEBI:29105"/>
        <label>1</label>
        <note>catalytic</note>
    </ligand>
</feature>
<feature type="binding site" evidence="5">
    <location>
        <position position="418"/>
    </location>
    <ligand>
        <name>Zn(2+)</name>
        <dbReference type="ChEBI" id="CHEBI:29105"/>
        <label>1</label>
        <note>catalytic</note>
    </ligand>
</feature>
<feature type="binding site" evidence="5">
    <location>
        <position position="529"/>
    </location>
    <ligand>
        <name>chloride</name>
        <dbReference type="ChEBI" id="CHEBI:17996"/>
        <label>1</label>
    </ligand>
</feature>
<feature type="binding site" evidence="5">
    <location>
        <position position="791"/>
    </location>
    <ligand>
        <name>chloride</name>
        <dbReference type="ChEBI" id="CHEBI:17996"/>
        <label>2</label>
    </ligand>
</feature>
<feature type="binding site" evidence="5">
    <location>
        <position position="829"/>
    </location>
    <ligand>
        <name>chloride</name>
        <dbReference type="ChEBI" id="CHEBI:17996"/>
        <label>3</label>
    </ligand>
</feature>
<feature type="binding site" evidence="5">
    <location>
        <position position="988"/>
    </location>
    <ligand>
        <name>Zn(2+)</name>
        <dbReference type="ChEBI" id="CHEBI:29105"/>
        <label>2</label>
        <note>catalytic</note>
    </ligand>
</feature>
<feature type="binding site" evidence="5">
    <location>
        <position position="992"/>
    </location>
    <ligand>
        <name>Zn(2+)</name>
        <dbReference type="ChEBI" id="CHEBI:29105"/>
        <label>2</label>
        <note>catalytic</note>
    </ligand>
</feature>
<feature type="binding site" evidence="5">
    <location>
        <position position="1016"/>
    </location>
    <ligand>
        <name>Zn(2+)</name>
        <dbReference type="ChEBI" id="CHEBI:29105"/>
        <label>2</label>
        <note>catalytic</note>
    </ligand>
</feature>
<feature type="binding site" evidence="5">
    <location>
        <position position="1090"/>
    </location>
    <ligand>
        <name>chloride</name>
        <dbReference type="ChEBI" id="CHEBI:17996"/>
        <label>2</label>
    </ligand>
</feature>
<feature type="binding site" evidence="5">
    <location>
        <position position="1094"/>
    </location>
    <ligand>
        <name>chloride</name>
        <dbReference type="ChEBI" id="CHEBI:17996"/>
        <label>2</label>
    </ligand>
</feature>
<feature type="binding site" evidence="5">
    <location>
        <position position="1127"/>
    </location>
    <ligand>
        <name>chloride</name>
        <dbReference type="ChEBI" id="CHEBI:17996"/>
        <label>3</label>
    </ligand>
</feature>
<feature type="site" description="Cleavage" evidence="2">
    <location>
        <begin position="1232"/>
        <end position="1233"/>
    </location>
</feature>
<feature type="modified residue" description="Phosphoserine" evidence="2">
    <location>
        <position position="1299"/>
    </location>
</feature>
<feature type="glycosylation site" description="N-linked (GlcNAc...) asparagine" evidence="4">
    <location>
        <position position="54"/>
    </location>
</feature>
<feature type="glycosylation site" description="N-linked (GlcNAc...) asparagine" evidence="4">
    <location>
        <position position="74"/>
    </location>
</feature>
<feature type="glycosylation site" description="N-linked (GlcNAc...) asparagine" evidence="4">
    <location>
        <position position="111"/>
    </location>
</feature>
<feature type="glycosylation site" description="N-linked (GlcNAc...) asparagine" evidence="4">
    <location>
        <position position="146"/>
    </location>
</feature>
<feature type="glycosylation site" description="N-linked (GlcNAc...) asparagine" evidence="4">
    <location>
        <position position="160"/>
    </location>
</feature>
<feature type="glycosylation site" description="N-linked (GlcNAc...) asparagine" evidence="4">
    <location>
        <position position="318"/>
    </location>
</feature>
<feature type="glycosylation site" description="N-linked (GlcNAc...) asparagine" evidence="4">
    <location>
        <position position="445"/>
    </location>
</feature>
<feature type="glycosylation site" description="N-linked (GlcNAc...) asparagine" evidence="4">
    <location>
        <position position="509"/>
    </location>
</feature>
<feature type="glycosylation site" description="N-linked (GlcNAc...) asparagine" evidence="4">
    <location>
        <position position="523"/>
    </location>
</feature>
<feature type="glycosylation site" description="N-linked (GlcNAc...) asparagine" evidence="4">
    <location>
        <position position="673"/>
    </location>
</feature>
<feature type="glycosylation site" description="N-linked (GlcNAc...) asparagine" evidence="4">
    <location>
        <position position="695"/>
    </location>
</feature>
<feature type="glycosylation site" description="N-linked (GlcNAc...) asparagine" evidence="4">
    <location>
        <position position="714"/>
    </location>
</feature>
<feature type="glycosylation site" description="N-linked (GlcNAc...) asparagine" evidence="4">
    <location>
        <position position="760"/>
    </location>
</feature>
<feature type="glycosylation site" description="N-linked (GlcNAc...) asparagine" evidence="4">
    <location>
        <position position="942"/>
    </location>
</feature>
<feature type="glycosylation site" description="N-linked (GlcNAc...) asparagine" evidence="4">
    <location>
        <position position="1191"/>
    </location>
</feature>
<feature type="glycosylation site" description="N-linked (GlcNAc...) asparagine" evidence="4">
    <location>
        <position position="1225"/>
    </location>
</feature>
<feature type="disulfide bond" evidence="5">
    <location>
        <begin position="157"/>
        <end position="165"/>
    </location>
</feature>
<feature type="disulfide bond" evidence="5">
    <location>
        <begin position="359"/>
        <end position="377"/>
    </location>
</feature>
<feature type="disulfide bond" evidence="5">
    <location>
        <begin position="545"/>
        <end position="557"/>
    </location>
</feature>
<feature type="disulfide bond" evidence="5">
    <location>
        <begin position="757"/>
        <end position="763"/>
    </location>
</feature>
<feature type="disulfide bond" evidence="5">
    <location>
        <begin position="957"/>
        <end position="975"/>
    </location>
</feature>
<feature type="disulfide bond" evidence="5">
    <location>
        <begin position="1143"/>
        <end position="1155"/>
    </location>
</feature>
<reference key="1">
    <citation type="journal article" date="2009" name="Genome Biol.">
        <title>A whole-genome assembly of the domestic cow, Bos taurus.</title>
        <authorList>
            <person name="Zimin A.V."/>
            <person name="Delcher A.L."/>
            <person name="Florea L."/>
            <person name="Kelley D.R."/>
            <person name="Schatz M.C."/>
            <person name="Puiu D."/>
            <person name="Hanrahan F."/>
            <person name="Pertea G."/>
            <person name="Van Tassell C.P."/>
            <person name="Sonstegard T.S."/>
            <person name="Marcais G."/>
            <person name="Roberts M."/>
            <person name="Subramanian P."/>
            <person name="Yorke J.A."/>
            <person name="Salzberg S.L."/>
        </authorList>
    </citation>
    <scope>NUCLEOTIDE SEQUENCE [LARGE SCALE GENOMIC DNA]</scope>
    <source>
        <strain>Hereford</strain>
    </source>
</reference>
<reference key="2">
    <citation type="submission" date="2007-11" db="EMBL/GenBank/DDBJ databases">
        <title>Analysis of the angiotensin converting enzyme promoter from Bos taurus.</title>
        <authorList>
            <person name="Mungunsukh O."/>
            <person name="Day R.M."/>
        </authorList>
    </citation>
    <scope>NUCLEOTIDE SEQUENCE [GENOMIC DNA] OF 1-100</scope>
</reference>
<reference key="3">
    <citation type="journal article" date="1986" name="Biochem. Biophys. Res. Commun.">
        <title>Bovine angiotensin-converting enzyme: amino-terminal sequence analysis and preliminary characterization of a hybridization-selected primary translation product.</title>
        <authorList>
            <person name="St Clair D.K."/>
            <person name="Presper K.A."/>
            <person name="Smith P.L."/>
            <person name="Stump D.C."/>
            <person name="Heath E.C."/>
        </authorList>
    </citation>
    <scope>PROTEIN SEQUENCE OF 29-50</scope>
    <source>
        <tissue>Lung</tissue>
    </source>
</reference>
<reference key="4">
    <citation type="journal article" date="1988" name="Kidney Int.">
        <title>Partial protein sequence of mouse and bovine kidney angiotensin converting enzyme.</title>
        <authorList>
            <person name="Bernstein K.E."/>
            <person name="Martin B.M."/>
            <person name="Striker L."/>
            <person name="Striker G."/>
        </authorList>
    </citation>
    <scope>PROTEIN SEQUENCE OF 29-50</scope>
</reference>
<protein>
    <recommendedName>
        <fullName evidence="8">Angiotensin-converting enzyme</fullName>
        <shortName evidence="8">ACE</shortName>
        <ecNumber evidence="2">3.4.15.1</ecNumber>
    </recommendedName>
    <alternativeName>
        <fullName>Dipeptidyl carboxypeptidase I</fullName>
    </alternativeName>
    <alternativeName>
        <fullName evidence="2">Kininase II</fullName>
    </alternativeName>
    <cdAntigenName>CD143</cdAntigenName>
    <component>
        <recommendedName>
            <fullName evidence="2">Angiotensin-converting enzyme, soluble form</fullName>
        </recommendedName>
    </component>
</protein>
<evidence type="ECO:0000250" key="1">
    <source>
        <dbReference type="UniProtKB" id="P09470"/>
    </source>
</evidence>
<evidence type="ECO:0000250" key="2">
    <source>
        <dbReference type="UniProtKB" id="P12821"/>
    </source>
</evidence>
<evidence type="ECO:0000250" key="3">
    <source>
        <dbReference type="UniProtKB" id="P12822"/>
    </source>
</evidence>
<evidence type="ECO:0000255" key="4"/>
<evidence type="ECO:0000255" key="5">
    <source>
        <dbReference type="PROSITE-ProRule" id="PRU01355"/>
    </source>
</evidence>
<evidence type="ECO:0000269" key="6">
    <source>
    </source>
</evidence>
<evidence type="ECO:0000269" key="7">
    <source>
    </source>
</evidence>
<evidence type="ECO:0000303" key="8">
    <source>
    </source>
</evidence>
<evidence type="ECO:0000305" key="9"/>